<sequence>MPIGVPKVPFRSPGEEDASWVDIYNRLYRERLLFLGQEVDSEISNQLIGLMIYLSIEDDTKDLYLFINSPGGWVIPGVALYDTMQFVQPDVHTICMGSAASMGSFILVGGEITKRLAFPHARVMIHQPAGSFSEVATGEFILEVGELLKLRETLTRVYVQRTGKPLWVVSEDMERDVFMSATEAQAYGIVDLVAVE</sequence>
<accession>Q332V2</accession>
<reference key="1">
    <citation type="journal article" date="2006" name="Transgenic Res.">
        <title>Efficient and stable transformation of Lactuca sativa L. cv. Cisco (lettuce) plastids.</title>
        <authorList>
            <person name="Kanamoto H."/>
            <person name="Yamashita A."/>
            <person name="Asao H."/>
            <person name="Okumura S."/>
            <person name="Takase H."/>
            <person name="Hattori M."/>
            <person name="Yokota A."/>
            <person name="Tomizawa K."/>
        </authorList>
    </citation>
    <scope>NUCLEOTIDE SEQUENCE [LARGE SCALE GENOMIC DNA]</scope>
    <source>
        <strain>cv. Cisco</strain>
    </source>
</reference>
<reference key="2">
    <citation type="submission" date="2006-01" db="EMBL/GenBank/DDBJ databases">
        <title>A comparison of the first two published chloroplast genomes in Asteraceae: Lactuca and Helianthus.</title>
        <authorList>
            <person name="Timme R.E."/>
            <person name="Kuehl J.V."/>
            <person name="Boore J.L."/>
            <person name="Jansen R.K."/>
        </authorList>
    </citation>
    <scope>NUCLEOTIDE SEQUENCE [LARGE SCALE GENOMIC DNA]</scope>
    <source>
        <strain>cv. Salinas</strain>
    </source>
</reference>
<evidence type="ECO:0000255" key="1">
    <source>
        <dbReference type="HAMAP-Rule" id="MF_00444"/>
    </source>
</evidence>
<protein>
    <recommendedName>
        <fullName evidence="1">ATP-dependent Clp protease proteolytic subunit</fullName>
        <ecNumber evidence="1">3.4.21.92</ecNumber>
    </recommendedName>
    <alternativeName>
        <fullName evidence="1">Endopeptidase Clp</fullName>
    </alternativeName>
</protein>
<comment type="function">
    <text evidence="1">Cleaves peptides in various proteins in a process that requires ATP hydrolysis. Has a chymotrypsin-like activity. Plays a major role in the degradation of misfolded proteins.</text>
</comment>
<comment type="catalytic activity">
    <reaction evidence="1">
        <text>Hydrolysis of proteins to small peptides in the presence of ATP and magnesium. alpha-casein is the usual test substrate. In the absence of ATP, only oligopeptides shorter than five residues are hydrolyzed (such as succinyl-Leu-Tyr-|-NHMec, and Leu-Tyr-Leu-|-Tyr-Trp, in which cleavage of the -Tyr-|-Leu- and -Tyr-|-Trp bonds also occurs).</text>
        <dbReference type="EC" id="3.4.21.92"/>
    </reaction>
</comment>
<comment type="subunit">
    <text>Component of the chloroplastic Clp protease core complex.</text>
</comment>
<comment type="subcellular location">
    <subcellularLocation>
        <location evidence="1">Plastid</location>
        <location evidence="1">Chloroplast stroma</location>
    </subcellularLocation>
</comment>
<comment type="similarity">
    <text evidence="1">Belongs to the peptidase S14 family.</text>
</comment>
<geneLocation type="chloroplast"/>
<organism>
    <name type="scientific">Lactuca sativa</name>
    <name type="common">Garden lettuce</name>
    <dbReference type="NCBI Taxonomy" id="4236"/>
    <lineage>
        <taxon>Eukaryota</taxon>
        <taxon>Viridiplantae</taxon>
        <taxon>Streptophyta</taxon>
        <taxon>Embryophyta</taxon>
        <taxon>Tracheophyta</taxon>
        <taxon>Spermatophyta</taxon>
        <taxon>Magnoliopsida</taxon>
        <taxon>eudicotyledons</taxon>
        <taxon>Gunneridae</taxon>
        <taxon>Pentapetalae</taxon>
        <taxon>asterids</taxon>
        <taxon>campanulids</taxon>
        <taxon>Asterales</taxon>
        <taxon>Asteraceae</taxon>
        <taxon>Cichorioideae</taxon>
        <taxon>Cichorieae</taxon>
        <taxon>Lactucinae</taxon>
        <taxon>Lactuca</taxon>
    </lineage>
</organism>
<dbReference type="EC" id="3.4.21.92" evidence="1"/>
<dbReference type="EMBL" id="AP007232">
    <property type="protein sequence ID" value="BAE47620.1"/>
    <property type="molecule type" value="Genomic_DNA"/>
</dbReference>
<dbReference type="EMBL" id="DQ383816">
    <property type="protein sequence ID" value="ABD47257.1"/>
    <property type="molecule type" value="Genomic_DNA"/>
</dbReference>
<dbReference type="RefSeq" id="YP_398353.1">
    <property type="nucleotide sequence ID" value="NC_007578.1"/>
</dbReference>
<dbReference type="SMR" id="Q332V2"/>
<dbReference type="MEROPS" id="S14.002"/>
<dbReference type="GeneID" id="3772847"/>
<dbReference type="KEGG" id="lsv:3772847"/>
<dbReference type="OrthoDB" id="1882605at2759"/>
<dbReference type="GO" id="GO:0009570">
    <property type="term" value="C:chloroplast stroma"/>
    <property type="evidence" value="ECO:0007669"/>
    <property type="project" value="UniProtKB-SubCell"/>
</dbReference>
<dbReference type="GO" id="GO:0004176">
    <property type="term" value="F:ATP-dependent peptidase activity"/>
    <property type="evidence" value="ECO:0007669"/>
    <property type="project" value="InterPro"/>
</dbReference>
<dbReference type="GO" id="GO:0004252">
    <property type="term" value="F:serine-type endopeptidase activity"/>
    <property type="evidence" value="ECO:0007669"/>
    <property type="project" value="UniProtKB-UniRule"/>
</dbReference>
<dbReference type="GO" id="GO:0006508">
    <property type="term" value="P:proteolysis"/>
    <property type="evidence" value="ECO:0007669"/>
    <property type="project" value="UniProtKB-UniRule"/>
</dbReference>
<dbReference type="CDD" id="cd07017">
    <property type="entry name" value="S14_ClpP_2"/>
    <property type="match status" value="1"/>
</dbReference>
<dbReference type="FunFam" id="3.90.226.10:FF:000006">
    <property type="entry name" value="ATP-dependent Clp protease proteolytic subunit"/>
    <property type="match status" value="1"/>
</dbReference>
<dbReference type="Gene3D" id="3.90.226.10">
    <property type="entry name" value="2-enoyl-CoA Hydratase, Chain A, domain 1"/>
    <property type="match status" value="1"/>
</dbReference>
<dbReference type="HAMAP" id="MF_00444">
    <property type="entry name" value="ClpP"/>
    <property type="match status" value="1"/>
</dbReference>
<dbReference type="InterPro" id="IPR001907">
    <property type="entry name" value="ClpP"/>
</dbReference>
<dbReference type="InterPro" id="IPR029045">
    <property type="entry name" value="ClpP/crotonase-like_dom_sf"/>
</dbReference>
<dbReference type="InterPro" id="IPR023562">
    <property type="entry name" value="ClpP/TepA"/>
</dbReference>
<dbReference type="InterPro" id="IPR033135">
    <property type="entry name" value="ClpP_His_AS"/>
</dbReference>
<dbReference type="InterPro" id="IPR018215">
    <property type="entry name" value="ClpP_Ser_AS"/>
</dbReference>
<dbReference type="PANTHER" id="PTHR10381">
    <property type="entry name" value="ATP-DEPENDENT CLP PROTEASE PROTEOLYTIC SUBUNIT"/>
    <property type="match status" value="1"/>
</dbReference>
<dbReference type="PANTHER" id="PTHR10381:SF15">
    <property type="entry name" value="CHLOROPLASTIC ATP-DEPENDENT CLP PROTEASE PROTEOLYTIC SUBUNIT 1"/>
    <property type="match status" value="1"/>
</dbReference>
<dbReference type="Pfam" id="PF00574">
    <property type="entry name" value="CLP_protease"/>
    <property type="match status" value="1"/>
</dbReference>
<dbReference type="PRINTS" id="PR00127">
    <property type="entry name" value="CLPPROTEASEP"/>
</dbReference>
<dbReference type="SUPFAM" id="SSF52096">
    <property type="entry name" value="ClpP/crotonase"/>
    <property type="match status" value="1"/>
</dbReference>
<dbReference type="PROSITE" id="PS00382">
    <property type="entry name" value="CLP_PROTEASE_HIS"/>
    <property type="match status" value="1"/>
</dbReference>
<dbReference type="PROSITE" id="PS00381">
    <property type="entry name" value="CLP_PROTEASE_SER"/>
    <property type="match status" value="1"/>
</dbReference>
<gene>
    <name evidence="1" type="primary">clpP</name>
</gene>
<proteinExistence type="inferred from homology"/>
<feature type="chain" id="PRO_0000275289" description="ATP-dependent Clp protease proteolytic subunit">
    <location>
        <begin position="1"/>
        <end position="196"/>
    </location>
</feature>
<feature type="active site" description="Nucleophile" evidence="1">
    <location>
        <position position="101"/>
    </location>
</feature>
<feature type="active site" evidence="1">
    <location>
        <position position="126"/>
    </location>
</feature>
<name>CLPP_LACSA</name>
<keyword id="KW-0150">Chloroplast</keyword>
<keyword id="KW-0378">Hydrolase</keyword>
<keyword id="KW-0934">Plastid</keyword>
<keyword id="KW-0645">Protease</keyword>
<keyword id="KW-0720">Serine protease</keyword>